<reference key="1">
    <citation type="submission" date="2008-02" db="EMBL/GenBank/DDBJ databases">
        <title>Complete sequence of Yersinia pseudotuberculosis YPIII.</title>
        <authorList>
            <consortium name="US DOE Joint Genome Institute"/>
            <person name="Copeland A."/>
            <person name="Lucas S."/>
            <person name="Lapidus A."/>
            <person name="Glavina del Rio T."/>
            <person name="Dalin E."/>
            <person name="Tice H."/>
            <person name="Bruce D."/>
            <person name="Goodwin L."/>
            <person name="Pitluck S."/>
            <person name="Munk A.C."/>
            <person name="Brettin T."/>
            <person name="Detter J.C."/>
            <person name="Han C."/>
            <person name="Tapia R."/>
            <person name="Schmutz J."/>
            <person name="Larimer F."/>
            <person name="Land M."/>
            <person name="Hauser L."/>
            <person name="Challacombe J.F."/>
            <person name="Green L."/>
            <person name="Lindler L.E."/>
            <person name="Nikolich M.P."/>
            <person name="Richardson P."/>
        </authorList>
    </citation>
    <scope>NUCLEOTIDE SEQUENCE [LARGE SCALE GENOMIC DNA]</scope>
    <source>
        <strain>YPIII</strain>
    </source>
</reference>
<feature type="chain" id="PRO_1000144883" description="Probable lipid kinase YegS-like">
    <location>
        <begin position="1"/>
        <end position="296"/>
    </location>
</feature>
<feature type="domain" description="DAGKc" evidence="1">
    <location>
        <begin position="1"/>
        <end position="130"/>
    </location>
</feature>
<feature type="active site" description="Proton acceptor" evidence="1">
    <location>
        <position position="268"/>
    </location>
</feature>
<feature type="binding site" evidence="1">
    <location>
        <position position="37"/>
    </location>
    <ligand>
        <name>ATP</name>
        <dbReference type="ChEBI" id="CHEBI:30616"/>
    </ligand>
</feature>
<feature type="binding site" evidence="1">
    <location>
        <begin position="63"/>
        <end position="69"/>
    </location>
    <ligand>
        <name>ATP</name>
        <dbReference type="ChEBI" id="CHEBI:30616"/>
    </ligand>
</feature>
<feature type="binding site" evidence="1">
    <location>
        <position position="92"/>
    </location>
    <ligand>
        <name>ATP</name>
        <dbReference type="ChEBI" id="CHEBI:30616"/>
    </ligand>
</feature>
<feature type="binding site" evidence="1">
    <location>
        <position position="212"/>
    </location>
    <ligand>
        <name>Mg(2+)</name>
        <dbReference type="ChEBI" id="CHEBI:18420"/>
    </ligand>
</feature>
<feature type="binding site" evidence="1">
    <location>
        <position position="215"/>
    </location>
    <ligand>
        <name>Mg(2+)</name>
        <dbReference type="ChEBI" id="CHEBI:18420"/>
    </ligand>
</feature>
<feature type="binding site" evidence="1">
    <location>
        <position position="217"/>
    </location>
    <ligand>
        <name>Mg(2+)</name>
        <dbReference type="ChEBI" id="CHEBI:18420"/>
    </ligand>
</feature>
<keyword id="KW-0067">ATP-binding</keyword>
<keyword id="KW-0963">Cytoplasm</keyword>
<keyword id="KW-0418">Kinase</keyword>
<keyword id="KW-0444">Lipid biosynthesis</keyword>
<keyword id="KW-0443">Lipid metabolism</keyword>
<keyword id="KW-0460">Magnesium</keyword>
<keyword id="KW-0479">Metal-binding</keyword>
<keyword id="KW-0547">Nucleotide-binding</keyword>
<keyword id="KW-0594">Phospholipid biosynthesis</keyword>
<keyword id="KW-1208">Phospholipid metabolism</keyword>
<keyword id="KW-0808">Transferase</keyword>
<evidence type="ECO:0000255" key="1">
    <source>
        <dbReference type="HAMAP-Rule" id="MF_01377"/>
    </source>
</evidence>
<sequence length="296" mass="31535">MPHTLLILNGKESGNPEVREAVKNVRDEGLTLHVRITWEHGDAKRYVEEAATLAVSTVIAGGGDGTINEVATALMSLPADKRPCLGILPLGTANDFATGCNIPLQIENALQLAVKGRAVAIDLAQVNGEHYFINMATGGFGTRITTETPDKLKAALGGVSYFIHGLMRLDALKADSCKIHGPDFHWSGDALVIGIGNGKQAGGGQLLCPDALINDGLMQLRLLTAKELLPAVLSTLFNGEKNKNVIDATVPWLDITAPNDITFNLDGEPLSGRHFHIEILPHAIQCRLPPNCPLLG</sequence>
<name>YEGS_YERPY</name>
<proteinExistence type="inferred from homology"/>
<protein>
    <recommendedName>
        <fullName evidence="1">Probable lipid kinase YegS-like</fullName>
        <ecNumber evidence="1">2.7.1.-</ecNumber>
    </recommendedName>
</protein>
<organism>
    <name type="scientific">Yersinia pseudotuberculosis serotype O:3 (strain YPIII)</name>
    <dbReference type="NCBI Taxonomy" id="502800"/>
    <lineage>
        <taxon>Bacteria</taxon>
        <taxon>Pseudomonadati</taxon>
        <taxon>Pseudomonadota</taxon>
        <taxon>Gammaproteobacteria</taxon>
        <taxon>Enterobacterales</taxon>
        <taxon>Yersiniaceae</taxon>
        <taxon>Yersinia</taxon>
    </lineage>
</organism>
<dbReference type="EC" id="2.7.1.-" evidence="1"/>
<dbReference type="EMBL" id="CP000950">
    <property type="protein sequence ID" value="ACA67618.1"/>
    <property type="molecule type" value="Genomic_DNA"/>
</dbReference>
<dbReference type="SMR" id="B1JSC7"/>
<dbReference type="KEGG" id="ypy:YPK_1324"/>
<dbReference type="PATRIC" id="fig|502800.11.peg.1959"/>
<dbReference type="GO" id="GO:0005737">
    <property type="term" value="C:cytoplasm"/>
    <property type="evidence" value="ECO:0007669"/>
    <property type="project" value="UniProtKB-SubCell"/>
</dbReference>
<dbReference type="GO" id="GO:0005886">
    <property type="term" value="C:plasma membrane"/>
    <property type="evidence" value="ECO:0007669"/>
    <property type="project" value="TreeGrafter"/>
</dbReference>
<dbReference type="GO" id="GO:0005524">
    <property type="term" value="F:ATP binding"/>
    <property type="evidence" value="ECO:0007669"/>
    <property type="project" value="UniProtKB-UniRule"/>
</dbReference>
<dbReference type="GO" id="GO:0001727">
    <property type="term" value="F:lipid kinase activity"/>
    <property type="evidence" value="ECO:0007669"/>
    <property type="project" value="UniProtKB-UniRule"/>
</dbReference>
<dbReference type="GO" id="GO:0000287">
    <property type="term" value="F:magnesium ion binding"/>
    <property type="evidence" value="ECO:0007669"/>
    <property type="project" value="UniProtKB-UniRule"/>
</dbReference>
<dbReference type="GO" id="GO:0008654">
    <property type="term" value="P:phospholipid biosynthetic process"/>
    <property type="evidence" value="ECO:0007669"/>
    <property type="project" value="UniProtKB-UniRule"/>
</dbReference>
<dbReference type="Gene3D" id="2.60.200.40">
    <property type="match status" value="1"/>
</dbReference>
<dbReference type="Gene3D" id="3.40.50.10330">
    <property type="entry name" value="Probable inorganic polyphosphate/atp-NAD kinase, domain 1"/>
    <property type="match status" value="1"/>
</dbReference>
<dbReference type="HAMAP" id="MF_01377">
    <property type="entry name" value="YegS"/>
    <property type="match status" value="1"/>
</dbReference>
<dbReference type="InterPro" id="IPR017438">
    <property type="entry name" value="ATP-NAD_kinase_N"/>
</dbReference>
<dbReference type="InterPro" id="IPR005218">
    <property type="entry name" value="Diacylglycerol/lipid_kinase"/>
</dbReference>
<dbReference type="InterPro" id="IPR001206">
    <property type="entry name" value="Diacylglycerol_kinase_cat_dom"/>
</dbReference>
<dbReference type="InterPro" id="IPR022433">
    <property type="entry name" value="Lip_kinase_YegS"/>
</dbReference>
<dbReference type="InterPro" id="IPR050187">
    <property type="entry name" value="Lipid_Phosphate_FormReg"/>
</dbReference>
<dbReference type="InterPro" id="IPR016064">
    <property type="entry name" value="NAD/diacylglycerol_kinase_sf"/>
</dbReference>
<dbReference type="InterPro" id="IPR045540">
    <property type="entry name" value="YegS/DAGK_C"/>
</dbReference>
<dbReference type="NCBIfam" id="TIGR03702">
    <property type="entry name" value="lip_kinase_YegS"/>
    <property type="match status" value="1"/>
</dbReference>
<dbReference type="NCBIfam" id="NF009602">
    <property type="entry name" value="PRK13054.1"/>
    <property type="match status" value="1"/>
</dbReference>
<dbReference type="NCBIfam" id="TIGR00147">
    <property type="entry name" value="YegS/Rv2252/BmrU family lipid kinase"/>
    <property type="match status" value="1"/>
</dbReference>
<dbReference type="PANTHER" id="PTHR12358:SF106">
    <property type="entry name" value="LIPID KINASE YEGS"/>
    <property type="match status" value="1"/>
</dbReference>
<dbReference type="PANTHER" id="PTHR12358">
    <property type="entry name" value="SPHINGOSINE KINASE"/>
    <property type="match status" value="1"/>
</dbReference>
<dbReference type="Pfam" id="PF00781">
    <property type="entry name" value="DAGK_cat"/>
    <property type="match status" value="1"/>
</dbReference>
<dbReference type="Pfam" id="PF19279">
    <property type="entry name" value="YegS_C"/>
    <property type="match status" value="1"/>
</dbReference>
<dbReference type="SMART" id="SM00046">
    <property type="entry name" value="DAGKc"/>
    <property type="match status" value="1"/>
</dbReference>
<dbReference type="SUPFAM" id="SSF111331">
    <property type="entry name" value="NAD kinase/diacylglycerol kinase-like"/>
    <property type="match status" value="1"/>
</dbReference>
<dbReference type="PROSITE" id="PS50146">
    <property type="entry name" value="DAGK"/>
    <property type="match status" value="1"/>
</dbReference>
<comment type="function">
    <text evidence="1">Probably phosphorylates lipids; the in vivo substrate is unknown.</text>
</comment>
<comment type="cofactor">
    <cofactor evidence="1">
        <name>Mg(2+)</name>
        <dbReference type="ChEBI" id="CHEBI:18420"/>
    </cofactor>
    <cofactor evidence="1">
        <name>Ca(2+)</name>
        <dbReference type="ChEBI" id="CHEBI:29108"/>
    </cofactor>
    <text evidence="1">Binds 1 Mg(2+) ion per subunit. Ca(2+) may be able to substitute.</text>
</comment>
<comment type="subcellular location">
    <subcellularLocation>
        <location evidence="1">Cytoplasm</location>
    </subcellularLocation>
</comment>
<comment type="similarity">
    <text evidence="1">Belongs to the diacylglycerol/lipid kinase family. YegS lipid kinase subfamily.</text>
</comment>
<gene>
    <name type="ordered locus">YPK_1324</name>
</gene>
<accession>B1JSC7</accession>